<accession>O58582</accession>
<reference key="1">
    <citation type="journal article" date="1998" name="DNA Res.">
        <title>Complete sequence and gene organization of the genome of a hyper-thermophilic archaebacterium, Pyrococcus horikoshii OT3.</title>
        <authorList>
            <person name="Kawarabayasi Y."/>
            <person name="Sawada M."/>
            <person name="Horikawa H."/>
            <person name="Haikawa Y."/>
            <person name="Hino Y."/>
            <person name="Yamamoto S."/>
            <person name="Sekine M."/>
            <person name="Baba S."/>
            <person name="Kosugi H."/>
            <person name="Hosoyama A."/>
            <person name="Nagai Y."/>
            <person name="Sakai M."/>
            <person name="Ogura K."/>
            <person name="Otsuka R."/>
            <person name="Nakazawa H."/>
            <person name="Takamiya M."/>
            <person name="Ohfuku Y."/>
            <person name="Funahashi T."/>
            <person name="Tanaka T."/>
            <person name="Kudoh Y."/>
            <person name="Yamazaki J."/>
            <person name="Kushida N."/>
            <person name="Oguchi A."/>
            <person name="Aoki K."/>
            <person name="Yoshizawa T."/>
            <person name="Nakamura Y."/>
            <person name="Robb F.T."/>
            <person name="Horikoshi K."/>
            <person name="Masuchi Y."/>
            <person name="Shizuya H."/>
            <person name="Kikuchi H."/>
        </authorList>
    </citation>
    <scope>NUCLEOTIDE SEQUENCE [LARGE SCALE GENOMIC DNA]</scope>
    <source>
        <strain>ATCC 700860 / DSM 12428 / JCM 9974 / NBRC 100139 / OT-3</strain>
    </source>
</reference>
<organism>
    <name type="scientific">Pyrococcus horikoshii (strain ATCC 700860 / DSM 12428 / JCM 9974 / NBRC 100139 / OT-3)</name>
    <dbReference type="NCBI Taxonomy" id="70601"/>
    <lineage>
        <taxon>Archaea</taxon>
        <taxon>Methanobacteriati</taxon>
        <taxon>Methanobacteriota</taxon>
        <taxon>Thermococci</taxon>
        <taxon>Thermococcales</taxon>
        <taxon>Thermococcaceae</taxon>
        <taxon>Pyrococcus</taxon>
    </lineage>
</organism>
<evidence type="ECO:0000250" key="1"/>
<evidence type="ECO:0000250" key="2">
    <source>
        <dbReference type="UniProtKB" id="P0AB89"/>
    </source>
</evidence>
<evidence type="ECO:0000305" key="3"/>
<proteinExistence type="inferred from homology"/>
<keyword id="KW-0456">Lyase</keyword>
<keyword id="KW-0658">Purine biosynthesis</keyword>
<sequence>MAVHPIDYRYGSEEMRKIWDEKNKLQKLLDVEAALARAHAKVGNIPEESAKVISERANTKWVKLERVKEIEAEIHHDIMAVVKALSEVCGEHGKYVHLGATSNDIIDTANALLIKESLEIVERDLKELRSILKQLAEKHIGTVCIGRTHGQHAVPTTYGMKFALWLDEIQRHIERLYQLKERVLVGKMRGAVGTAASFGEKAFEIERLVMEDLGLKPARITNQIVQRDVYAELLFFLALVASTLDKMGLEIRNLQRTEILEVSEPFGEKQVGSSTMPHKRNPIRTEKVCGLARVLYSNVIPALLNNPLWHERDLTNSSVERVILPESFVLLDEMLKTMKKVLTGLEFFPENIRRNLYLTKNLIMAEPLMLKLAEKGMGRQEAHEVVRQLAMKAFRENRDLLEVAKESREITKYLTERDLEELKPENYIGKAREIVKKVIEYVEEMERRGL</sequence>
<name>PUR8_PYRHO</name>
<dbReference type="EC" id="4.3.2.2" evidence="2"/>
<dbReference type="EMBL" id="BA000001">
    <property type="protein sequence ID" value="BAA29946.1"/>
    <property type="molecule type" value="Genomic_DNA"/>
</dbReference>
<dbReference type="PIR" id="H71135">
    <property type="entry name" value="H71135"/>
</dbReference>
<dbReference type="RefSeq" id="WP_010884945.1">
    <property type="nucleotide sequence ID" value="NC_000961.1"/>
</dbReference>
<dbReference type="SMR" id="O58582"/>
<dbReference type="STRING" id="70601.gene:9377803"/>
<dbReference type="EnsemblBacteria" id="BAA29946">
    <property type="protein sequence ID" value="BAA29946"/>
    <property type="gene ID" value="BAA29946"/>
</dbReference>
<dbReference type="GeneID" id="1443180"/>
<dbReference type="KEGG" id="pho:PH0852"/>
<dbReference type="eggNOG" id="arCOG01747">
    <property type="taxonomic scope" value="Archaea"/>
</dbReference>
<dbReference type="OrthoDB" id="7033at2157"/>
<dbReference type="UniPathway" id="UPA00074">
    <property type="reaction ID" value="UER00132"/>
</dbReference>
<dbReference type="UniPathway" id="UPA00075">
    <property type="reaction ID" value="UER00336"/>
</dbReference>
<dbReference type="Proteomes" id="UP000000752">
    <property type="component" value="Chromosome"/>
</dbReference>
<dbReference type="GO" id="GO:0005829">
    <property type="term" value="C:cytosol"/>
    <property type="evidence" value="ECO:0007669"/>
    <property type="project" value="TreeGrafter"/>
</dbReference>
<dbReference type="GO" id="GO:0070626">
    <property type="term" value="F:(S)-2-(5-amino-1-(5-phospho-D-ribosyl)imidazole-4-carboxamido) succinate lyase (fumarate-forming) activity"/>
    <property type="evidence" value="ECO:0007669"/>
    <property type="project" value="TreeGrafter"/>
</dbReference>
<dbReference type="GO" id="GO:0004018">
    <property type="term" value="F:N6-(1,2-dicarboxyethyl)AMP AMP-lyase (fumarate-forming) activity"/>
    <property type="evidence" value="ECO:0007669"/>
    <property type="project" value="InterPro"/>
</dbReference>
<dbReference type="GO" id="GO:0044208">
    <property type="term" value="P:'de novo' AMP biosynthetic process"/>
    <property type="evidence" value="ECO:0007669"/>
    <property type="project" value="UniProtKB-UniPathway"/>
</dbReference>
<dbReference type="GO" id="GO:0006189">
    <property type="term" value="P:'de novo' IMP biosynthetic process"/>
    <property type="evidence" value="ECO:0007669"/>
    <property type="project" value="UniProtKB-UniPathway"/>
</dbReference>
<dbReference type="CDD" id="cd01360">
    <property type="entry name" value="Adenylsuccinate_lyase_1"/>
    <property type="match status" value="1"/>
</dbReference>
<dbReference type="FunFam" id="1.10.275.10:FF:000012">
    <property type="entry name" value="Adenylosuccinate lyase"/>
    <property type="match status" value="1"/>
</dbReference>
<dbReference type="FunFam" id="1.10.40.30:FF:000007">
    <property type="entry name" value="Adenylosuccinate lyase"/>
    <property type="match status" value="1"/>
</dbReference>
<dbReference type="FunFam" id="1.20.200.10:FF:000008">
    <property type="entry name" value="Adenylosuccinate lyase"/>
    <property type="match status" value="1"/>
</dbReference>
<dbReference type="Gene3D" id="1.10.40.30">
    <property type="entry name" value="Fumarase/aspartase (C-terminal domain)"/>
    <property type="match status" value="1"/>
</dbReference>
<dbReference type="Gene3D" id="1.20.200.10">
    <property type="entry name" value="Fumarase/aspartase (Central domain)"/>
    <property type="match status" value="1"/>
</dbReference>
<dbReference type="Gene3D" id="1.10.275.10">
    <property type="entry name" value="Fumarase/aspartase (N-terminal domain)"/>
    <property type="match status" value="1"/>
</dbReference>
<dbReference type="InterPro" id="IPR019468">
    <property type="entry name" value="AdenyloSucc_lyase_C"/>
</dbReference>
<dbReference type="InterPro" id="IPR024083">
    <property type="entry name" value="Fumarase/histidase_N"/>
</dbReference>
<dbReference type="InterPro" id="IPR020557">
    <property type="entry name" value="Fumarate_lyase_CS"/>
</dbReference>
<dbReference type="InterPro" id="IPR000362">
    <property type="entry name" value="Fumarate_lyase_fam"/>
</dbReference>
<dbReference type="InterPro" id="IPR022761">
    <property type="entry name" value="Fumarate_lyase_N"/>
</dbReference>
<dbReference type="InterPro" id="IPR008948">
    <property type="entry name" value="L-Aspartase-like"/>
</dbReference>
<dbReference type="InterPro" id="IPR004769">
    <property type="entry name" value="Pur_lyase"/>
</dbReference>
<dbReference type="NCBIfam" id="TIGR00928">
    <property type="entry name" value="purB"/>
    <property type="match status" value="1"/>
</dbReference>
<dbReference type="PANTHER" id="PTHR43172">
    <property type="entry name" value="ADENYLOSUCCINATE LYASE"/>
    <property type="match status" value="1"/>
</dbReference>
<dbReference type="PANTHER" id="PTHR43172:SF1">
    <property type="entry name" value="ADENYLOSUCCINATE LYASE"/>
    <property type="match status" value="1"/>
</dbReference>
<dbReference type="Pfam" id="PF10397">
    <property type="entry name" value="ADSL_C"/>
    <property type="match status" value="1"/>
</dbReference>
<dbReference type="Pfam" id="PF00206">
    <property type="entry name" value="Lyase_1"/>
    <property type="match status" value="1"/>
</dbReference>
<dbReference type="PRINTS" id="PR00145">
    <property type="entry name" value="ARGSUCLYASE"/>
</dbReference>
<dbReference type="PRINTS" id="PR00149">
    <property type="entry name" value="FUMRATELYASE"/>
</dbReference>
<dbReference type="SMART" id="SM00998">
    <property type="entry name" value="ADSL_C"/>
    <property type="match status" value="1"/>
</dbReference>
<dbReference type="SUPFAM" id="SSF48557">
    <property type="entry name" value="L-aspartase-like"/>
    <property type="match status" value="1"/>
</dbReference>
<dbReference type="PROSITE" id="PS00163">
    <property type="entry name" value="FUMARATE_LYASES"/>
    <property type="match status" value="1"/>
</dbReference>
<feature type="chain" id="PRO_0000137891" description="Adenylosuccinate lyase">
    <location>
        <begin position="1"/>
        <end position="450"/>
    </location>
</feature>
<feature type="active site" description="Proton donor/acceptor" evidence="2">
    <location>
        <position position="149"/>
    </location>
</feature>
<feature type="active site" description="Proton donor/acceptor" evidence="2">
    <location>
        <position position="273"/>
    </location>
</feature>
<feature type="binding site" evidence="2">
    <location>
        <begin position="9"/>
        <end position="10"/>
    </location>
    <ligand>
        <name>N(6)-(1,2-dicarboxyethyl)-AMP</name>
        <dbReference type="ChEBI" id="CHEBI:57567"/>
    </ligand>
</feature>
<feature type="binding site" evidence="2">
    <location>
        <begin position="75"/>
        <end position="77"/>
    </location>
    <ligand>
        <name>N(6)-(1,2-dicarboxyethyl)-AMP</name>
        <dbReference type="ChEBI" id="CHEBI:57567"/>
    </ligand>
</feature>
<feature type="binding site" evidence="2">
    <location>
        <begin position="101"/>
        <end position="102"/>
    </location>
    <ligand>
        <name>N(6)-(1,2-dicarboxyethyl)-AMP</name>
        <dbReference type="ChEBI" id="CHEBI:57567"/>
    </ligand>
</feature>
<feature type="binding site" evidence="2">
    <location>
        <position position="223"/>
    </location>
    <ligand>
        <name>N(6)-(1,2-dicarboxyethyl)-AMP</name>
        <dbReference type="ChEBI" id="CHEBI:57567"/>
    </ligand>
</feature>
<feature type="binding site" evidence="2">
    <location>
        <position position="274"/>
    </location>
    <ligand>
        <name>N(6)-(1,2-dicarboxyethyl)-AMP</name>
        <dbReference type="ChEBI" id="CHEBI:57567"/>
    </ligand>
</feature>
<feature type="binding site" evidence="2">
    <location>
        <begin position="279"/>
        <end position="281"/>
    </location>
    <ligand>
        <name>N(6)-(1,2-dicarboxyethyl)-AMP</name>
        <dbReference type="ChEBI" id="CHEBI:57567"/>
    </ligand>
</feature>
<feature type="binding site" evidence="2">
    <location>
        <begin position="318"/>
        <end position="322"/>
    </location>
    <ligand>
        <name>N(6)-(1,2-dicarboxyethyl)-AMP</name>
        <dbReference type="ChEBI" id="CHEBI:57567"/>
    </ligand>
</feature>
<gene>
    <name type="primary">purB</name>
    <name type="ordered locus">PH0852</name>
</gene>
<protein>
    <recommendedName>
        <fullName>Adenylosuccinate lyase</fullName>
        <shortName>ASL</shortName>
        <ecNumber evidence="2">4.3.2.2</ecNumber>
    </recommendedName>
    <alternativeName>
        <fullName>Adenylosuccinase</fullName>
        <shortName>ASase</shortName>
    </alternativeName>
</protein>
<comment type="function">
    <text evidence="2">Catalyzes two reactions in de novo purine nucleotide biosynthesis. Catalyzes the breakdown of 5-aminoimidazole- (N-succinylocarboxamide) ribotide (SAICAR or 2-[5-amino-1-(5-phospho-beta-D-ribosyl)imidazole-4-carboxamido]succinate) to 5-aminoimidazole-4-carboxamide ribotide (AICAR or 5-amino-1-(5-phospho-beta-D-ribosyl)imidazole-4-carboxamide) and fumarate, and of adenylosuccinate (ADS or N(6)-(1,2-dicarboxyethyl)-AMP) to adenosine monophosphate (AMP) and fumarate.</text>
</comment>
<comment type="catalytic activity">
    <reaction evidence="2">
        <text>N(6)-(1,2-dicarboxyethyl)-AMP = fumarate + AMP</text>
        <dbReference type="Rhea" id="RHEA:16853"/>
        <dbReference type="ChEBI" id="CHEBI:29806"/>
        <dbReference type="ChEBI" id="CHEBI:57567"/>
        <dbReference type="ChEBI" id="CHEBI:456215"/>
        <dbReference type="EC" id="4.3.2.2"/>
    </reaction>
    <physiologicalReaction direction="left-to-right" evidence="2">
        <dbReference type="Rhea" id="RHEA:16854"/>
    </physiologicalReaction>
</comment>
<comment type="catalytic activity">
    <reaction evidence="2">
        <text>(2S)-2-[5-amino-1-(5-phospho-beta-D-ribosyl)imidazole-4-carboxamido]succinate = 5-amino-1-(5-phospho-beta-D-ribosyl)imidazole-4-carboxamide + fumarate</text>
        <dbReference type="Rhea" id="RHEA:23920"/>
        <dbReference type="ChEBI" id="CHEBI:29806"/>
        <dbReference type="ChEBI" id="CHEBI:58443"/>
        <dbReference type="ChEBI" id="CHEBI:58475"/>
        <dbReference type="EC" id="4.3.2.2"/>
    </reaction>
    <physiologicalReaction direction="left-to-right" evidence="2">
        <dbReference type="Rhea" id="RHEA:23921"/>
    </physiologicalReaction>
</comment>
<comment type="pathway">
    <text>Purine metabolism; AMP biosynthesis via de novo pathway; AMP from IMP: step 2/2.</text>
</comment>
<comment type="pathway">
    <text>Purine metabolism; IMP biosynthesis via de novo pathway; 5-amino-1-(5-phospho-D-ribosyl)imidazole-4-carboxamide from 5-amino-1-(5-phospho-D-ribosyl)imidazole-4-carboxylate: step 2/2.</text>
</comment>
<comment type="subunit">
    <text evidence="1">Homotetramer. Residues from neighboring subunits contribute catalytic and substrate-binding residues to each active site (By similarity).</text>
</comment>
<comment type="similarity">
    <text evidence="3">Belongs to the lyase 1 family. Adenylosuccinate lyase subfamily.</text>
</comment>